<name>RS21_LEGPC</name>
<dbReference type="EMBL" id="CP000675">
    <property type="protein sequence ID" value="ABQ55760.1"/>
    <property type="molecule type" value="Genomic_DNA"/>
</dbReference>
<dbReference type="RefSeq" id="WP_010948064.1">
    <property type="nucleotide sequence ID" value="NZ_JAPMSS010000012.1"/>
</dbReference>
<dbReference type="SMR" id="A5IEG0"/>
<dbReference type="GeneID" id="57036351"/>
<dbReference type="KEGG" id="lpc:LPC_1827"/>
<dbReference type="HOGENOM" id="CLU_159258_1_0_6"/>
<dbReference type="GO" id="GO:1990904">
    <property type="term" value="C:ribonucleoprotein complex"/>
    <property type="evidence" value="ECO:0007669"/>
    <property type="project" value="UniProtKB-KW"/>
</dbReference>
<dbReference type="GO" id="GO:0005840">
    <property type="term" value="C:ribosome"/>
    <property type="evidence" value="ECO:0007669"/>
    <property type="project" value="UniProtKB-KW"/>
</dbReference>
<dbReference type="GO" id="GO:0003735">
    <property type="term" value="F:structural constituent of ribosome"/>
    <property type="evidence" value="ECO:0007669"/>
    <property type="project" value="InterPro"/>
</dbReference>
<dbReference type="GO" id="GO:0006412">
    <property type="term" value="P:translation"/>
    <property type="evidence" value="ECO:0007669"/>
    <property type="project" value="UniProtKB-UniRule"/>
</dbReference>
<dbReference type="Gene3D" id="1.20.5.1150">
    <property type="entry name" value="Ribosomal protein S8"/>
    <property type="match status" value="1"/>
</dbReference>
<dbReference type="HAMAP" id="MF_00358">
    <property type="entry name" value="Ribosomal_bS21"/>
    <property type="match status" value="1"/>
</dbReference>
<dbReference type="InterPro" id="IPR001911">
    <property type="entry name" value="Ribosomal_bS21"/>
</dbReference>
<dbReference type="InterPro" id="IPR018278">
    <property type="entry name" value="Ribosomal_bS21_CS"/>
</dbReference>
<dbReference type="InterPro" id="IPR038380">
    <property type="entry name" value="Ribosomal_bS21_sf"/>
</dbReference>
<dbReference type="NCBIfam" id="TIGR00030">
    <property type="entry name" value="S21p"/>
    <property type="match status" value="1"/>
</dbReference>
<dbReference type="PANTHER" id="PTHR21109">
    <property type="entry name" value="MITOCHONDRIAL 28S RIBOSOMAL PROTEIN S21"/>
    <property type="match status" value="1"/>
</dbReference>
<dbReference type="PANTHER" id="PTHR21109:SF22">
    <property type="entry name" value="SMALL RIBOSOMAL SUBUNIT PROTEIN BS21"/>
    <property type="match status" value="1"/>
</dbReference>
<dbReference type="Pfam" id="PF01165">
    <property type="entry name" value="Ribosomal_S21"/>
    <property type="match status" value="1"/>
</dbReference>
<dbReference type="PRINTS" id="PR00976">
    <property type="entry name" value="RIBOSOMALS21"/>
</dbReference>
<dbReference type="PROSITE" id="PS01181">
    <property type="entry name" value="RIBOSOMAL_S21"/>
    <property type="match status" value="1"/>
</dbReference>
<gene>
    <name evidence="1" type="primary">rpsU</name>
    <name type="ordered locus">LPC_1827</name>
</gene>
<comment type="similarity">
    <text evidence="1">Belongs to the bacterial ribosomal protein bS21 family.</text>
</comment>
<feature type="chain" id="PRO_1000005130" description="Small ribosomal subunit protein bS21">
    <location>
        <begin position="1"/>
        <end position="79"/>
    </location>
</feature>
<feature type="region of interest" description="Disordered" evidence="2">
    <location>
        <begin position="47"/>
        <end position="79"/>
    </location>
</feature>
<feature type="compositionally biased region" description="Basic residues" evidence="2">
    <location>
        <begin position="47"/>
        <end position="59"/>
    </location>
</feature>
<feature type="compositionally biased region" description="Basic residues" evidence="2">
    <location>
        <begin position="69"/>
        <end position="79"/>
    </location>
</feature>
<reference key="1">
    <citation type="submission" date="2006-11" db="EMBL/GenBank/DDBJ databases">
        <title>Identification and characterization of a new conjugation/ type IVA secretion system (trb/tra) of L. pneumophila Corby localized on a mobile genomic island.</title>
        <authorList>
            <person name="Gloeckner G."/>
            <person name="Albert-Weissenberger C."/>
            <person name="Weinmann E."/>
            <person name="Jacobi S."/>
            <person name="Schunder E."/>
            <person name="Steinert M."/>
            <person name="Buchrieser C."/>
            <person name="Hacker J."/>
            <person name="Heuner K."/>
        </authorList>
    </citation>
    <scope>NUCLEOTIDE SEQUENCE [LARGE SCALE GENOMIC DNA]</scope>
    <source>
        <strain>Corby</strain>
    </source>
</reference>
<sequence>MPTVRVKEGENPEYALRRFKRSCEKAGILTELRRREFYEKPTAERKRKQAAAVKRHLKKISRDVSSRRGVGHRRKKSTT</sequence>
<keyword id="KW-0687">Ribonucleoprotein</keyword>
<keyword id="KW-0689">Ribosomal protein</keyword>
<organism>
    <name type="scientific">Legionella pneumophila (strain Corby)</name>
    <dbReference type="NCBI Taxonomy" id="400673"/>
    <lineage>
        <taxon>Bacteria</taxon>
        <taxon>Pseudomonadati</taxon>
        <taxon>Pseudomonadota</taxon>
        <taxon>Gammaproteobacteria</taxon>
        <taxon>Legionellales</taxon>
        <taxon>Legionellaceae</taxon>
        <taxon>Legionella</taxon>
    </lineage>
</organism>
<proteinExistence type="inferred from homology"/>
<protein>
    <recommendedName>
        <fullName evidence="1">Small ribosomal subunit protein bS21</fullName>
    </recommendedName>
    <alternativeName>
        <fullName evidence="3">30S ribosomal protein S21</fullName>
    </alternativeName>
</protein>
<evidence type="ECO:0000255" key="1">
    <source>
        <dbReference type="HAMAP-Rule" id="MF_00358"/>
    </source>
</evidence>
<evidence type="ECO:0000256" key="2">
    <source>
        <dbReference type="SAM" id="MobiDB-lite"/>
    </source>
</evidence>
<evidence type="ECO:0000305" key="3"/>
<accession>A5IEG0</accession>